<name>SYR_METTH</name>
<protein>
    <recommendedName>
        <fullName>Arginine--tRNA ligase</fullName>
        <ecNumber>6.1.1.19</ecNumber>
    </recommendedName>
    <alternativeName>
        <fullName>Arginyl-tRNA synthetase</fullName>
        <shortName>ArgRS</shortName>
    </alternativeName>
</protein>
<gene>
    <name type="primary">argS</name>
    <name type="ordered locus">MTH_1447</name>
</gene>
<sequence>MFRYIEKEARDSITAALEKLGIKVPPEIKLEEPPNPQLGDLASTVSFELAGKLRRAPIEITADIMSVIETPEIFETIESKGPYINFFVDYGRFSSRLLESIQDDYGSHPPRDERVILEHTSANPNGPLHIGHIRNAIIGDSLARILRMAGYDVETQYYVNDMGRQIAMIVWGLLNLDGDLEDYPGDKMDHRVGKLYFEVNQRLKENPGIRDEVDELIRKYEAGENEELFRKVVEYCLSGMEETMKRLHVHHDRFVWEGQFVRDGTVDRVIESLRKTGYTGENDVLYLDLEEFGLEKELVLTRSDGTSLYSTRDIAYHLQKSEEGDVIIDVLGSDHKLAAEQVGIAVELLGGKRPEVIFYEFITLPEGSMSTRRGVFISVDELMDEAHSRALHEVKKRRDLPDDVADDIAESIGNGAIRYYIARLSPEKHIVFRWDDALSFERGCASIQYAHARACKLLEKASFTGEEDIEDGWKPEGDERELVRLLARFPVVVEESALARRVHPVAQYAQDLANTFNSFYRSTPVIGSDFEGARLRLVDSVRKTLRNALNLLGIHAPETM</sequence>
<comment type="catalytic activity">
    <reaction>
        <text>tRNA(Arg) + L-arginine + ATP = L-arginyl-tRNA(Arg) + AMP + diphosphate</text>
        <dbReference type="Rhea" id="RHEA:20301"/>
        <dbReference type="Rhea" id="RHEA-COMP:9658"/>
        <dbReference type="Rhea" id="RHEA-COMP:9673"/>
        <dbReference type="ChEBI" id="CHEBI:30616"/>
        <dbReference type="ChEBI" id="CHEBI:32682"/>
        <dbReference type="ChEBI" id="CHEBI:33019"/>
        <dbReference type="ChEBI" id="CHEBI:78442"/>
        <dbReference type="ChEBI" id="CHEBI:78513"/>
        <dbReference type="ChEBI" id="CHEBI:456215"/>
        <dbReference type="EC" id="6.1.1.19"/>
    </reaction>
</comment>
<comment type="subcellular location">
    <subcellularLocation>
        <location evidence="1">Cytoplasm</location>
    </subcellularLocation>
</comment>
<comment type="similarity">
    <text evidence="2">Belongs to the class-I aminoacyl-tRNA synthetase family.</text>
</comment>
<proteinExistence type="inferred from homology"/>
<evidence type="ECO:0000250" key="1"/>
<evidence type="ECO:0000305" key="2"/>
<organism>
    <name type="scientific">Methanothermobacter thermautotrophicus (strain ATCC 29096 / DSM 1053 / JCM 10044 / NBRC 100330 / Delta H)</name>
    <name type="common">Methanobacterium thermoautotrophicum</name>
    <dbReference type="NCBI Taxonomy" id="187420"/>
    <lineage>
        <taxon>Archaea</taxon>
        <taxon>Methanobacteriati</taxon>
        <taxon>Methanobacteriota</taxon>
        <taxon>Methanomada group</taxon>
        <taxon>Methanobacteria</taxon>
        <taxon>Methanobacteriales</taxon>
        <taxon>Methanobacteriaceae</taxon>
        <taxon>Methanothermobacter</taxon>
    </lineage>
</organism>
<dbReference type="EC" id="6.1.1.19"/>
<dbReference type="EMBL" id="AE000666">
    <property type="protein sequence ID" value="AAB85922.1"/>
    <property type="molecule type" value="Genomic_DNA"/>
</dbReference>
<dbReference type="PIR" id="F69059">
    <property type="entry name" value="F69059"/>
</dbReference>
<dbReference type="RefSeq" id="WP_010877057.1">
    <property type="nucleotide sequence ID" value="NC_000916.1"/>
</dbReference>
<dbReference type="SMR" id="O27496"/>
<dbReference type="FunCoup" id="O27496">
    <property type="interactions" value="198"/>
</dbReference>
<dbReference type="STRING" id="187420.MTH_1447"/>
<dbReference type="PaxDb" id="187420-MTH_1447"/>
<dbReference type="EnsemblBacteria" id="AAB85922">
    <property type="protein sequence ID" value="AAB85922"/>
    <property type="gene ID" value="MTH_1447"/>
</dbReference>
<dbReference type="GeneID" id="77403849"/>
<dbReference type="KEGG" id="mth:MTH_1447"/>
<dbReference type="PATRIC" id="fig|187420.15.peg.1409"/>
<dbReference type="HOGENOM" id="CLU_006406_6_1_2"/>
<dbReference type="InParanoid" id="O27496"/>
<dbReference type="Proteomes" id="UP000005223">
    <property type="component" value="Chromosome"/>
</dbReference>
<dbReference type="GO" id="GO:0005737">
    <property type="term" value="C:cytoplasm"/>
    <property type="evidence" value="ECO:0007669"/>
    <property type="project" value="UniProtKB-SubCell"/>
</dbReference>
<dbReference type="GO" id="GO:0004814">
    <property type="term" value="F:arginine-tRNA ligase activity"/>
    <property type="evidence" value="ECO:0007669"/>
    <property type="project" value="UniProtKB-UniRule"/>
</dbReference>
<dbReference type="GO" id="GO:0005524">
    <property type="term" value="F:ATP binding"/>
    <property type="evidence" value="ECO:0007669"/>
    <property type="project" value="UniProtKB-UniRule"/>
</dbReference>
<dbReference type="GO" id="GO:0006420">
    <property type="term" value="P:arginyl-tRNA aminoacylation"/>
    <property type="evidence" value="ECO:0007669"/>
    <property type="project" value="UniProtKB-UniRule"/>
</dbReference>
<dbReference type="CDD" id="cd00671">
    <property type="entry name" value="ArgRS_core"/>
    <property type="match status" value="1"/>
</dbReference>
<dbReference type="Gene3D" id="3.30.1360.70">
    <property type="entry name" value="Arginyl tRNA synthetase N-terminal domain"/>
    <property type="match status" value="1"/>
</dbReference>
<dbReference type="Gene3D" id="3.40.50.620">
    <property type="entry name" value="HUPs"/>
    <property type="match status" value="1"/>
</dbReference>
<dbReference type="Gene3D" id="1.10.730.10">
    <property type="entry name" value="Isoleucyl-tRNA Synthetase, Domain 1"/>
    <property type="match status" value="1"/>
</dbReference>
<dbReference type="HAMAP" id="MF_00123">
    <property type="entry name" value="Arg_tRNA_synth"/>
    <property type="match status" value="1"/>
</dbReference>
<dbReference type="InterPro" id="IPR001412">
    <property type="entry name" value="aa-tRNA-synth_I_CS"/>
</dbReference>
<dbReference type="InterPro" id="IPR001278">
    <property type="entry name" value="Arg-tRNA-ligase"/>
</dbReference>
<dbReference type="InterPro" id="IPR005148">
    <property type="entry name" value="Arg-tRNA-synth_N"/>
</dbReference>
<dbReference type="InterPro" id="IPR036695">
    <property type="entry name" value="Arg-tRNA-synth_N_sf"/>
</dbReference>
<dbReference type="InterPro" id="IPR035684">
    <property type="entry name" value="ArgRS_core"/>
</dbReference>
<dbReference type="InterPro" id="IPR008909">
    <property type="entry name" value="DALR_anticod-bd"/>
</dbReference>
<dbReference type="InterPro" id="IPR014729">
    <property type="entry name" value="Rossmann-like_a/b/a_fold"/>
</dbReference>
<dbReference type="InterPro" id="IPR009080">
    <property type="entry name" value="tRNAsynth_Ia_anticodon-bd"/>
</dbReference>
<dbReference type="NCBIfam" id="TIGR00456">
    <property type="entry name" value="argS"/>
    <property type="match status" value="1"/>
</dbReference>
<dbReference type="PANTHER" id="PTHR11956:SF5">
    <property type="entry name" value="ARGININE--TRNA LIGASE, CYTOPLASMIC"/>
    <property type="match status" value="1"/>
</dbReference>
<dbReference type="PANTHER" id="PTHR11956">
    <property type="entry name" value="ARGINYL-TRNA SYNTHETASE"/>
    <property type="match status" value="1"/>
</dbReference>
<dbReference type="Pfam" id="PF03485">
    <property type="entry name" value="Arg_tRNA_synt_N"/>
    <property type="match status" value="1"/>
</dbReference>
<dbReference type="Pfam" id="PF05746">
    <property type="entry name" value="DALR_1"/>
    <property type="match status" value="1"/>
</dbReference>
<dbReference type="Pfam" id="PF00750">
    <property type="entry name" value="tRNA-synt_1d"/>
    <property type="match status" value="1"/>
</dbReference>
<dbReference type="PRINTS" id="PR01038">
    <property type="entry name" value="TRNASYNTHARG"/>
</dbReference>
<dbReference type="SMART" id="SM01016">
    <property type="entry name" value="Arg_tRNA_synt_N"/>
    <property type="match status" value="1"/>
</dbReference>
<dbReference type="SMART" id="SM00836">
    <property type="entry name" value="DALR_1"/>
    <property type="match status" value="1"/>
</dbReference>
<dbReference type="SUPFAM" id="SSF47323">
    <property type="entry name" value="Anticodon-binding domain of a subclass of class I aminoacyl-tRNA synthetases"/>
    <property type="match status" value="1"/>
</dbReference>
<dbReference type="SUPFAM" id="SSF55190">
    <property type="entry name" value="Arginyl-tRNA synthetase (ArgRS), N-terminal 'additional' domain"/>
    <property type="match status" value="1"/>
</dbReference>
<dbReference type="SUPFAM" id="SSF52374">
    <property type="entry name" value="Nucleotidylyl transferase"/>
    <property type="match status" value="1"/>
</dbReference>
<dbReference type="PROSITE" id="PS00178">
    <property type="entry name" value="AA_TRNA_LIGASE_I"/>
    <property type="match status" value="1"/>
</dbReference>
<accession>O27496</accession>
<keyword id="KW-0030">Aminoacyl-tRNA synthetase</keyword>
<keyword id="KW-0067">ATP-binding</keyword>
<keyword id="KW-0963">Cytoplasm</keyword>
<keyword id="KW-0436">Ligase</keyword>
<keyword id="KW-0547">Nucleotide-binding</keyword>
<keyword id="KW-0648">Protein biosynthesis</keyword>
<keyword id="KW-1185">Reference proteome</keyword>
<feature type="chain" id="PRO_0000151649" description="Arginine--tRNA ligase">
    <location>
        <begin position="1"/>
        <end position="560"/>
    </location>
</feature>
<feature type="short sequence motif" description="'HIGH' region">
    <location>
        <begin position="122"/>
        <end position="132"/>
    </location>
</feature>
<reference key="1">
    <citation type="journal article" date="1997" name="J. Bacteriol.">
        <title>Complete genome sequence of Methanobacterium thermoautotrophicum deltaH: functional analysis and comparative genomics.</title>
        <authorList>
            <person name="Smith D.R."/>
            <person name="Doucette-Stamm L.A."/>
            <person name="Deloughery C."/>
            <person name="Lee H.-M."/>
            <person name="Dubois J."/>
            <person name="Aldredge T."/>
            <person name="Bashirzadeh R."/>
            <person name="Blakely D."/>
            <person name="Cook R."/>
            <person name="Gilbert K."/>
            <person name="Harrison D."/>
            <person name="Hoang L."/>
            <person name="Keagle P."/>
            <person name="Lumm W."/>
            <person name="Pothier B."/>
            <person name="Qiu D."/>
            <person name="Spadafora R."/>
            <person name="Vicare R."/>
            <person name="Wang Y."/>
            <person name="Wierzbowski J."/>
            <person name="Gibson R."/>
            <person name="Jiwani N."/>
            <person name="Caruso A."/>
            <person name="Bush D."/>
            <person name="Safer H."/>
            <person name="Patwell D."/>
            <person name="Prabhakar S."/>
            <person name="McDougall S."/>
            <person name="Shimer G."/>
            <person name="Goyal A."/>
            <person name="Pietrovski S."/>
            <person name="Church G.M."/>
            <person name="Daniels C.J."/>
            <person name="Mao J.-I."/>
            <person name="Rice P."/>
            <person name="Noelling J."/>
            <person name="Reeve J.N."/>
        </authorList>
    </citation>
    <scope>NUCLEOTIDE SEQUENCE [LARGE SCALE GENOMIC DNA]</scope>
    <source>
        <strain>ATCC 29096 / DSM 1053 / JCM 10044 / NBRC 100330 / Delta H</strain>
    </source>
</reference>